<feature type="chain" id="PRO_1000054617" description="Large ribosomal subunit protein uL16">
    <location>
        <begin position="1"/>
        <end position="136"/>
    </location>
</feature>
<evidence type="ECO:0000255" key="1">
    <source>
        <dbReference type="HAMAP-Rule" id="MF_01342"/>
    </source>
</evidence>
<evidence type="ECO:0000305" key="2"/>
<proteinExistence type="inferred from homology"/>
<name>RL16_ECOK1</name>
<comment type="function">
    <text evidence="1">Binds 23S rRNA and is also seen to make contacts with the A and possibly P site tRNAs.</text>
</comment>
<comment type="subunit">
    <text evidence="1">Part of the 50S ribosomal subunit.</text>
</comment>
<comment type="similarity">
    <text evidence="1">Belongs to the universal ribosomal protein uL16 family.</text>
</comment>
<accession>A1AGK1</accession>
<sequence>MLQPKRTKFRKMHKGRNRGLAQGTDVSFGSFGLKAVGRGRLTARQIEAARRAMTRAVKRQGKIWIRVFPDKPITEKPLAVRMGKGKGNVEYWVALIQPGKVLYEMDGVPEELAREAFKLAAAKLPIKTTFVTKTVM</sequence>
<gene>
    <name evidence="1" type="primary">rplP</name>
    <name type="ordered locus">Ecok1_32970</name>
    <name type="ORF">APECO1_3137</name>
</gene>
<protein>
    <recommendedName>
        <fullName evidence="1">Large ribosomal subunit protein uL16</fullName>
    </recommendedName>
    <alternativeName>
        <fullName evidence="2">50S ribosomal protein L16</fullName>
    </alternativeName>
</protein>
<keyword id="KW-1185">Reference proteome</keyword>
<keyword id="KW-0687">Ribonucleoprotein</keyword>
<keyword id="KW-0689">Ribosomal protein</keyword>
<keyword id="KW-0694">RNA-binding</keyword>
<keyword id="KW-0699">rRNA-binding</keyword>
<keyword id="KW-0820">tRNA-binding</keyword>
<organism>
    <name type="scientific">Escherichia coli O1:K1 / APEC</name>
    <dbReference type="NCBI Taxonomy" id="405955"/>
    <lineage>
        <taxon>Bacteria</taxon>
        <taxon>Pseudomonadati</taxon>
        <taxon>Pseudomonadota</taxon>
        <taxon>Gammaproteobacteria</taxon>
        <taxon>Enterobacterales</taxon>
        <taxon>Enterobacteriaceae</taxon>
        <taxon>Escherichia</taxon>
    </lineage>
</organism>
<dbReference type="EMBL" id="CP000468">
    <property type="protein sequence ID" value="ABJ02791.1"/>
    <property type="molecule type" value="Genomic_DNA"/>
</dbReference>
<dbReference type="RefSeq" id="WP_000941212.1">
    <property type="nucleotide sequence ID" value="NZ_CADILS010000044.1"/>
</dbReference>
<dbReference type="EMDB" id="EMD-29788"/>
<dbReference type="EMDB" id="EMD-43929"/>
<dbReference type="EMDB" id="EMD-45569"/>
<dbReference type="EMDB" id="EMD-45572"/>
<dbReference type="EMDB" id="EMD-45573"/>
<dbReference type="SMR" id="A1AGK1"/>
<dbReference type="GeneID" id="93778674"/>
<dbReference type="KEGG" id="ecv:APECO1_3137"/>
<dbReference type="HOGENOM" id="CLU_078858_2_1_6"/>
<dbReference type="Proteomes" id="UP000008216">
    <property type="component" value="Chromosome"/>
</dbReference>
<dbReference type="GO" id="GO:0022625">
    <property type="term" value="C:cytosolic large ribosomal subunit"/>
    <property type="evidence" value="ECO:0007669"/>
    <property type="project" value="TreeGrafter"/>
</dbReference>
<dbReference type="GO" id="GO:0019843">
    <property type="term" value="F:rRNA binding"/>
    <property type="evidence" value="ECO:0007669"/>
    <property type="project" value="UniProtKB-UniRule"/>
</dbReference>
<dbReference type="GO" id="GO:0003735">
    <property type="term" value="F:structural constituent of ribosome"/>
    <property type="evidence" value="ECO:0007669"/>
    <property type="project" value="InterPro"/>
</dbReference>
<dbReference type="GO" id="GO:0000049">
    <property type="term" value="F:tRNA binding"/>
    <property type="evidence" value="ECO:0007669"/>
    <property type="project" value="UniProtKB-KW"/>
</dbReference>
<dbReference type="GO" id="GO:0006412">
    <property type="term" value="P:translation"/>
    <property type="evidence" value="ECO:0007669"/>
    <property type="project" value="UniProtKB-UniRule"/>
</dbReference>
<dbReference type="CDD" id="cd01433">
    <property type="entry name" value="Ribosomal_L16_L10e"/>
    <property type="match status" value="1"/>
</dbReference>
<dbReference type="FunFam" id="3.90.1170.10:FF:000001">
    <property type="entry name" value="50S ribosomal protein L16"/>
    <property type="match status" value="1"/>
</dbReference>
<dbReference type="Gene3D" id="3.90.1170.10">
    <property type="entry name" value="Ribosomal protein L10e/L16"/>
    <property type="match status" value="1"/>
</dbReference>
<dbReference type="HAMAP" id="MF_01342">
    <property type="entry name" value="Ribosomal_uL16"/>
    <property type="match status" value="1"/>
</dbReference>
<dbReference type="InterPro" id="IPR047873">
    <property type="entry name" value="Ribosomal_uL16"/>
</dbReference>
<dbReference type="InterPro" id="IPR000114">
    <property type="entry name" value="Ribosomal_uL16_bact-type"/>
</dbReference>
<dbReference type="InterPro" id="IPR020798">
    <property type="entry name" value="Ribosomal_uL16_CS"/>
</dbReference>
<dbReference type="InterPro" id="IPR016180">
    <property type="entry name" value="Ribosomal_uL16_dom"/>
</dbReference>
<dbReference type="InterPro" id="IPR036920">
    <property type="entry name" value="Ribosomal_uL16_sf"/>
</dbReference>
<dbReference type="NCBIfam" id="TIGR01164">
    <property type="entry name" value="rplP_bact"/>
    <property type="match status" value="1"/>
</dbReference>
<dbReference type="PANTHER" id="PTHR12220">
    <property type="entry name" value="50S/60S RIBOSOMAL PROTEIN L16"/>
    <property type="match status" value="1"/>
</dbReference>
<dbReference type="PANTHER" id="PTHR12220:SF13">
    <property type="entry name" value="LARGE RIBOSOMAL SUBUNIT PROTEIN UL16M"/>
    <property type="match status" value="1"/>
</dbReference>
<dbReference type="Pfam" id="PF00252">
    <property type="entry name" value="Ribosomal_L16"/>
    <property type="match status" value="1"/>
</dbReference>
<dbReference type="PRINTS" id="PR00060">
    <property type="entry name" value="RIBOSOMALL16"/>
</dbReference>
<dbReference type="SUPFAM" id="SSF54686">
    <property type="entry name" value="Ribosomal protein L16p/L10e"/>
    <property type="match status" value="1"/>
</dbReference>
<dbReference type="PROSITE" id="PS00586">
    <property type="entry name" value="RIBOSOMAL_L16_1"/>
    <property type="match status" value="1"/>
</dbReference>
<dbReference type="PROSITE" id="PS00701">
    <property type="entry name" value="RIBOSOMAL_L16_2"/>
    <property type="match status" value="1"/>
</dbReference>
<reference key="1">
    <citation type="journal article" date="2007" name="J. Bacteriol.">
        <title>The genome sequence of avian pathogenic Escherichia coli strain O1:K1:H7 shares strong similarities with human extraintestinal pathogenic E. coli genomes.</title>
        <authorList>
            <person name="Johnson T.J."/>
            <person name="Kariyawasam S."/>
            <person name="Wannemuehler Y."/>
            <person name="Mangiamele P."/>
            <person name="Johnson S.J."/>
            <person name="Doetkott C."/>
            <person name="Skyberg J.A."/>
            <person name="Lynne A.M."/>
            <person name="Johnson J.R."/>
            <person name="Nolan L.K."/>
        </authorList>
    </citation>
    <scope>NUCLEOTIDE SEQUENCE [LARGE SCALE GENOMIC DNA]</scope>
</reference>